<accession>Q12QW7</accession>
<proteinExistence type="inferred from homology"/>
<comment type="function">
    <text evidence="1">Presumably involved in the processing and regular turnover of intracellular proteins. Catalyzes the removal of unsubstituted N-terminal amino acids from various peptides.</text>
</comment>
<comment type="catalytic activity">
    <reaction evidence="1">
        <text>Release of an N-terminal amino acid, Xaa-|-Yaa-, in which Xaa is preferably Leu, but may be other amino acids including Pro although not Arg or Lys, and Yaa may be Pro. Amino acid amides and methyl esters are also readily hydrolyzed, but rates on arylamides are exceedingly low.</text>
        <dbReference type="EC" id="3.4.11.1"/>
    </reaction>
</comment>
<comment type="catalytic activity">
    <reaction evidence="1">
        <text>Release of an N-terminal amino acid, preferentially leucine, but not glutamic or aspartic acids.</text>
        <dbReference type="EC" id="3.4.11.10"/>
    </reaction>
</comment>
<comment type="cofactor">
    <cofactor evidence="1">
        <name>Mn(2+)</name>
        <dbReference type="ChEBI" id="CHEBI:29035"/>
    </cofactor>
    <text evidence="1">Binds 2 manganese ions per subunit.</text>
</comment>
<comment type="subcellular location">
    <subcellularLocation>
        <location evidence="1">Cytoplasm</location>
    </subcellularLocation>
</comment>
<comment type="similarity">
    <text evidence="1">Belongs to the peptidase M17 family.</text>
</comment>
<reference key="1">
    <citation type="submission" date="2006-03" db="EMBL/GenBank/DDBJ databases">
        <title>Complete sequence of Shewanella denitrificans OS217.</title>
        <authorList>
            <consortium name="US DOE Joint Genome Institute"/>
            <person name="Copeland A."/>
            <person name="Lucas S."/>
            <person name="Lapidus A."/>
            <person name="Barry K."/>
            <person name="Detter J.C."/>
            <person name="Glavina del Rio T."/>
            <person name="Hammon N."/>
            <person name="Israni S."/>
            <person name="Dalin E."/>
            <person name="Tice H."/>
            <person name="Pitluck S."/>
            <person name="Brettin T."/>
            <person name="Bruce D."/>
            <person name="Han C."/>
            <person name="Tapia R."/>
            <person name="Gilna P."/>
            <person name="Kiss H."/>
            <person name="Schmutz J."/>
            <person name="Larimer F."/>
            <person name="Land M."/>
            <person name="Hauser L."/>
            <person name="Kyrpides N."/>
            <person name="Lykidis A."/>
            <person name="Richardson P."/>
        </authorList>
    </citation>
    <scope>NUCLEOTIDE SEQUENCE [LARGE SCALE GENOMIC DNA]</scope>
    <source>
        <strain>OS217 / ATCC BAA-1090 / DSM 15013</strain>
    </source>
</reference>
<gene>
    <name evidence="1" type="primary">pepA</name>
    <name type="ordered locus">Sden_0871</name>
</gene>
<organism>
    <name type="scientific">Shewanella denitrificans (strain OS217 / ATCC BAA-1090 / DSM 15013)</name>
    <dbReference type="NCBI Taxonomy" id="318161"/>
    <lineage>
        <taxon>Bacteria</taxon>
        <taxon>Pseudomonadati</taxon>
        <taxon>Pseudomonadota</taxon>
        <taxon>Gammaproteobacteria</taxon>
        <taxon>Alteromonadales</taxon>
        <taxon>Shewanellaceae</taxon>
        <taxon>Shewanella</taxon>
    </lineage>
</organism>
<protein>
    <recommendedName>
        <fullName evidence="1">Probable cytosol aminopeptidase</fullName>
        <ecNumber evidence="1">3.4.11.1</ecNumber>
    </recommendedName>
    <alternativeName>
        <fullName evidence="1">Leucine aminopeptidase</fullName>
        <shortName evidence="1">LAP</shortName>
        <ecNumber evidence="1">3.4.11.10</ecNumber>
    </alternativeName>
    <alternativeName>
        <fullName evidence="1">Leucyl aminopeptidase</fullName>
    </alternativeName>
</protein>
<keyword id="KW-0031">Aminopeptidase</keyword>
<keyword id="KW-0963">Cytoplasm</keyword>
<keyword id="KW-0378">Hydrolase</keyword>
<keyword id="KW-0464">Manganese</keyword>
<keyword id="KW-0479">Metal-binding</keyword>
<keyword id="KW-0645">Protease</keyword>
<keyword id="KW-1185">Reference proteome</keyword>
<evidence type="ECO:0000255" key="1">
    <source>
        <dbReference type="HAMAP-Rule" id="MF_00181"/>
    </source>
</evidence>
<dbReference type="EC" id="3.4.11.1" evidence="1"/>
<dbReference type="EC" id="3.4.11.10" evidence="1"/>
<dbReference type="EMBL" id="CP000302">
    <property type="protein sequence ID" value="ABE54159.1"/>
    <property type="molecule type" value="Genomic_DNA"/>
</dbReference>
<dbReference type="RefSeq" id="WP_011495324.1">
    <property type="nucleotide sequence ID" value="NC_007954.1"/>
</dbReference>
<dbReference type="SMR" id="Q12QW7"/>
<dbReference type="STRING" id="318161.Sden_0871"/>
<dbReference type="MEROPS" id="M17.003"/>
<dbReference type="KEGG" id="sdn:Sden_0871"/>
<dbReference type="eggNOG" id="COG0260">
    <property type="taxonomic scope" value="Bacteria"/>
</dbReference>
<dbReference type="HOGENOM" id="CLU_013734_2_2_6"/>
<dbReference type="OrthoDB" id="9809354at2"/>
<dbReference type="Proteomes" id="UP000001982">
    <property type="component" value="Chromosome"/>
</dbReference>
<dbReference type="GO" id="GO:0005737">
    <property type="term" value="C:cytoplasm"/>
    <property type="evidence" value="ECO:0007669"/>
    <property type="project" value="UniProtKB-SubCell"/>
</dbReference>
<dbReference type="GO" id="GO:0030145">
    <property type="term" value="F:manganese ion binding"/>
    <property type="evidence" value="ECO:0007669"/>
    <property type="project" value="UniProtKB-UniRule"/>
</dbReference>
<dbReference type="GO" id="GO:0070006">
    <property type="term" value="F:metalloaminopeptidase activity"/>
    <property type="evidence" value="ECO:0007669"/>
    <property type="project" value="InterPro"/>
</dbReference>
<dbReference type="GO" id="GO:0006508">
    <property type="term" value="P:proteolysis"/>
    <property type="evidence" value="ECO:0007669"/>
    <property type="project" value="UniProtKB-KW"/>
</dbReference>
<dbReference type="CDD" id="cd00433">
    <property type="entry name" value="Peptidase_M17"/>
    <property type="match status" value="1"/>
</dbReference>
<dbReference type="FunFam" id="3.40.220.10:FF:000001">
    <property type="entry name" value="Probable cytosol aminopeptidase"/>
    <property type="match status" value="1"/>
</dbReference>
<dbReference type="FunFam" id="3.40.630.10:FF:000004">
    <property type="entry name" value="Probable cytosol aminopeptidase"/>
    <property type="match status" value="1"/>
</dbReference>
<dbReference type="Gene3D" id="3.40.220.10">
    <property type="entry name" value="Leucine Aminopeptidase, subunit E, domain 1"/>
    <property type="match status" value="1"/>
</dbReference>
<dbReference type="Gene3D" id="3.40.630.10">
    <property type="entry name" value="Zn peptidases"/>
    <property type="match status" value="1"/>
</dbReference>
<dbReference type="HAMAP" id="MF_00181">
    <property type="entry name" value="Cytosol_peptidase_M17"/>
    <property type="match status" value="1"/>
</dbReference>
<dbReference type="InterPro" id="IPR011356">
    <property type="entry name" value="Leucine_aapep/pepB"/>
</dbReference>
<dbReference type="InterPro" id="IPR043472">
    <property type="entry name" value="Macro_dom-like"/>
</dbReference>
<dbReference type="InterPro" id="IPR000819">
    <property type="entry name" value="Peptidase_M17_C"/>
</dbReference>
<dbReference type="InterPro" id="IPR023042">
    <property type="entry name" value="Peptidase_M17_leu_NH2_pept"/>
</dbReference>
<dbReference type="InterPro" id="IPR008283">
    <property type="entry name" value="Peptidase_M17_N"/>
</dbReference>
<dbReference type="NCBIfam" id="NF002072">
    <property type="entry name" value="PRK00913.1-1"/>
    <property type="match status" value="1"/>
</dbReference>
<dbReference type="NCBIfam" id="NF002074">
    <property type="entry name" value="PRK00913.1-4"/>
    <property type="match status" value="1"/>
</dbReference>
<dbReference type="NCBIfam" id="NF002077">
    <property type="entry name" value="PRK00913.2-4"/>
    <property type="match status" value="1"/>
</dbReference>
<dbReference type="PANTHER" id="PTHR11963:SF23">
    <property type="entry name" value="CYTOSOL AMINOPEPTIDASE"/>
    <property type="match status" value="1"/>
</dbReference>
<dbReference type="PANTHER" id="PTHR11963">
    <property type="entry name" value="LEUCINE AMINOPEPTIDASE-RELATED"/>
    <property type="match status" value="1"/>
</dbReference>
<dbReference type="Pfam" id="PF00883">
    <property type="entry name" value="Peptidase_M17"/>
    <property type="match status" value="1"/>
</dbReference>
<dbReference type="Pfam" id="PF02789">
    <property type="entry name" value="Peptidase_M17_N"/>
    <property type="match status" value="1"/>
</dbReference>
<dbReference type="PRINTS" id="PR00481">
    <property type="entry name" value="LAMNOPPTDASE"/>
</dbReference>
<dbReference type="SUPFAM" id="SSF52949">
    <property type="entry name" value="Macro domain-like"/>
    <property type="match status" value="1"/>
</dbReference>
<dbReference type="SUPFAM" id="SSF53187">
    <property type="entry name" value="Zn-dependent exopeptidases"/>
    <property type="match status" value="1"/>
</dbReference>
<dbReference type="PROSITE" id="PS00631">
    <property type="entry name" value="CYTOSOL_AP"/>
    <property type="match status" value="1"/>
</dbReference>
<feature type="chain" id="PRO_1000019977" description="Probable cytosol aminopeptidase">
    <location>
        <begin position="1"/>
        <end position="502"/>
    </location>
</feature>
<feature type="active site" evidence="1">
    <location>
        <position position="281"/>
    </location>
</feature>
<feature type="active site" evidence="1">
    <location>
        <position position="355"/>
    </location>
</feature>
<feature type="binding site" evidence="1">
    <location>
        <position position="269"/>
    </location>
    <ligand>
        <name>Mn(2+)</name>
        <dbReference type="ChEBI" id="CHEBI:29035"/>
        <label>2</label>
    </ligand>
</feature>
<feature type="binding site" evidence="1">
    <location>
        <position position="274"/>
    </location>
    <ligand>
        <name>Mn(2+)</name>
        <dbReference type="ChEBI" id="CHEBI:29035"/>
        <label>1</label>
    </ligand>
</feature>
<feature type="binding site" evidence="1">
    <location>
        <position position="274"/>
    </location>
    <ligand>
        <name>Mn(2+)</name>
        <dbReference type="ChEBI" id="CHEBI:29035"/>
        <label>2</label>
    </ligand>
</feature>
<feature type="binding site" evidence="1">
    <location>
        <position position="292"/>
    </location>
    <ligand>
        <name>Mn(2+)</name>
        <dbReference type="ChEBI" id="CHEBI:29035"/>
        <label>2</label>
    </ligand>
</feature>
<feature type="binding site" evidence="1">
    <location>
        <position position="351"/>
    </location>
    <ligand>
        <name>Mn(2+)</name>
        <dbReference type="ChEBI" id="CHEBI:29035"/>
        <label>1</label>
    </ligand>
</feature>
<feature type="binding site" evidence="1">
    <location>
        <position position="353"/>
    </location>
    <ligand>
        <name>Mn(2+)</name>
        <dbReference type="ChEBI" id="CHEBI:29035"/>
        <label>1</label>
    </ligand>
</feature>
<feature type="binding site" evidence="1">
    <location>
        <position position="353"/>
    </location>
    <ligand>
        <name>Mn(2+)</name>
        <dbReference type="ChEBI" id="CHEBI:29035"/>
        <label>2</label>
    </ligand>
</feature>
<name>AMPA_SHEDO</name>
<sequence length="502" mass="54717">MEFSVKSGSPEKQRSACIVVGVYEPRRLSGIAEQLDKISEGYISNLLRRGDLEGKPGQMLLLHHVPNVLSERVLLVGCGKERELDERQYKQIITKTISTLNETGSMEAVCFLTELHVKGRDTYWKVRQAVETTQASLYSFDALKTRKGETRRPLRKMVFNVPTRKELTIGERAVEHGMAVSAGMHLCRDVANMPPNICNPAYLASQARQMAETHDKLKVTTIGEEQMAKLGMNSYLAVGRGSSNESIMTVMEYKGAVDSADKPIVLVGKGLTFDSGGISLKPGEAMDEMKYDMGGAAGVIGAMKALCEMNLPINVIGILAGCENMPSGNSYRPGDILTTMSGQTVEVLNTDAEGRLVLCDVLTYVERFEPELVIDTATLTGACVIALGKHASGLFSSHNPLAHELLNAGEQSGDRAWRMPLWEEYQDMLDSPFADMTNLGGRPAGSITAACFLSRFTKKYNWAHLDVAGTAWNSGANKGSTGRPVPILSQFLINRSGVEISE</sequence>